<proteinExistence type="inferred from homology"/>
<accession>P57803</accession>
<dbReference type="EC" id="2.8.1.7" evidence="1"/>
<dbReference type="EMBL" id="AE004439">
    <property type="protein sequence ID" value="AAK02402.1"/>
    <property type="molecule type" value="Genomic_DNA"/>
</dbReference>
<dbReference type="RefSeq" id="WP_010906586.1">
    <property type="nucleotide sequence ID" value="NC_002663.1"/>
</dbReference>
<dbReference type="SMR" id="P57803"/>
<dbReference type="STRING" id="272843.PM0318"/>
<dbReference type="EnsemblBacteria" id="AAK02402">
    <property type="protein sequence ID" value="AAK02402"/>
    <property type="gene ID" value="PM0318"/>
</dbReference>
<dbReference type="KEGG" id="pmu:PM0318"/>
<dbReference type="PATRIC" id="fig|272843.6.peg.331"/>
<dbReference type="HOGENOM" id="CLU_003433_0_2_6"/>
<dbReference type="OrthoDB" id="9808002at2"/>
<dbReference type="UniPathway" id="UPA00266"/>
<dbReference type="Proteomes" id="UP000000809">
    <property type="component" value="Chromosome"/>
</dbReference>
<dbReference type="GO" id="GO:1990221">
    <property type="term" value="C:L-cysteine desulfurase complex"/>
    <property type="evidence" value="ECO:0007669"/>
    <property type="project" value="UniProtKB-ARBA"/>
</dbReference>
<dbReference type="GO" id="GO:0051537">
    <property type="term" value="F:2 iron, 2 sulfur cluster binding"/>
    <property type="evidence" value="ECO:0007669"/>
    <property type="project" value="UniProtKB-UniRule"/>
</dbReference>
<dbReference type="GO" id="GO:0031071">
    <property type="term" value="F:cysteine desulfurase activity"/>
    <property type="evidence" value="ECO:0007669"/>
    <property type="project" value="UniProtKB-UniRule"/>
</dbReference>
<dbReference type="GO" id="GO:0046872">
    <property type="term" value="F:metal ion binding"/>
    <property type="evidence" value="ECO:0007669"/>
    <property type="project" value="UniProtKB-KW"/>
</dbReference>
<dbReference type="GO" id="GO:0030170">
    <property type="term" value="F:pyridoxal phosphate binding"/>
    <property type="evidence" value="ECO:0007669"/>
    <property type="project" value="UniProtKB-UniRule"/>
</dbReference>
<dbReference type="GO" id="GO:0044571">
    <property type="term" value="P:[2Fe-2S] cluster assembly"/>
    <property type="evidence" value="ECO:0007669"/>
    <property type="project" value="UniProtKB-UniRule"/>
</dbReference>
<dbReference type="FunFam" id="3.40.640.10:FF:000003">
    <property type="entry name" value="Cysteine desulfurase IscS"/>
    <property type="match status" value="1"/>
</dbReference>
<dbReference type="FunFam" id="3.90.1150.10:FF:000002">
    <property type="entry name" value="Cysteine desulfurase IscS"/>
    <property type="match status" value="1"/>
</dbReference>
<dbReference type="Gene3D" id="3.90.1150.10">
    <property type="entry name" value="Aspartate Aminotransferase, domain 1"/>
    <property type="match status" value="1"/>
</dbReference>
<dbReference type="Gene3D" id="3.40.640.10">
    <property type="entry name" value="Type I PLP-dependent aspartate aminotransferase-like (Major domain)"/>
    <property type="match status" value="1"/>
</dbReference>
<dbReference type="HAMAP" id="MF_00331">
    <property type="entry name" value="Cys_desulf_IscS"/>
    <property type="match status" value="1"/>
</dbReference>
<dbReference type="InterPro" id="IPR000192">
    <property type="entry name" value="Aminotrans_V_dom"/>
</dbReference>
<dbReference type="InterPro" id="IPR020578">
    <property type="entry name" value="Aminotrans_V_PyrdxlP_BS"/>
</dbReference>
<dbReference type="InterPro" id="IPR010240">
    <property type="entry name" value="Cys_deSase_IscS"/>
</dbReference>
<dbReference type="InterPro" id="IPR016454">
    <property type="entry name" value="Cysteine_dSase"/>
</dbReference>
<dbReference type="InterPro" id="IPR015424">
    <property type="entry name" value="PyrdxlP-dep_Trfase"/>
</dbReference>
<dbReference type="InterPro" id="IPR015421">
    <property type="entry name" value="PyrdxlP-dep_Trfase_major"/>
</dbReference>
<dbReference type="InterPro" id="IPR015422">
    <property type="entry name" value="PyrdxlP-dep_Trfase_small"/>
</dbReference>
<dbReference type="NCBIfam" id="TIGR02006">
    <property type="entry name" value="IscS"/>
    <property type="match status" value="1"/>
</dbReference>
<dbReference type="NCBIfam" id="NF002806">
    <property type="entry name" value="PRK02948.1"/>
    <property type="match status" value="1"/>
</dbReference>
<dbReference type="NCBIfam" id="NF010611">
    <property type="entry name" value="PRK14012.1"/>
    <property type="match status" value="1"/>
</dbReference>
<dbReference type="PANTHER" id="PTHR11601:SF34">
    <property type="entry name" value="CYSTEINE DESULFURASE"/>
    <property type="match status" value="1"/>
</dbReference>
<dbReference type="PANTHER" id="PTHR11601">
    <property type="entry name" value="CYSTEINE DESULFURYLASE FAMILY MEMBER"/>
    <property type="match status" value="1"/>
</dbReference>
<dbReference type="Pfam" id="PF00266">
    <property type="entry name" value="Aminotran_5"/>
    <property type="match status" value="1"/>
</dbReference>
<dbReference type="PIRSF" id="PIRSF005572">
    <property type="entry name" value="NifS"/>
    <property type="match status" value="1"/>
</dbReference>
<dbReference type="SUPFAM" id="SSF53383">
    <property type="entry name" value="PLP-dependent transferases"/>
    <property type="match status" value="1"/>
</dbReference>
<dbReference type="PROSITE" id="PS00595">
    <property type="entry name" value="AA_TRANSFER_CLASS_5"/>
    <property type="match status" value="1"/>
</dbReference>
<evidence type="ECO:0000255" key="1">
    <source>
        <dbReference type="HAMAP-Rule" id="MF_00331"/>
    </source>
</evidence>
<sequence>MKLPIYLDYAATCPVDERVAKKMMEYLTVEGNFGNPASRSHKFGWQAEEAVDVARNYIADLIGADSREIVFTSGATESDNLAIKGAAHFYQSKGKHIITCKTEHKAVLDTCRQLEREGFEVTYLNPKSDGLIDLEELKNAMRDDTILVSIMHVNNEIGVIQDIAAIGELCRARKILFHVDATQSVGKLPINLAELKVDLMSMSSHKLYGPKGIGALYVSRKPRVRLEAIIHGGGHERGMRSGTLPVHQIVGMGEAYRICKEEMASEMPRLKALRDRLYNGLKDIEETYVNGSMEHRLDSNLNISFNYVEGESLMMALRDIAVSSGSACTSASLEPSYVLRALGLNDELAHSSIRFTLGRYTTEEEIDYTIELVKNAVAKLRELSPLWDMFKEGIDLNTIEWTHH</sequence>
<comment type="function">
    <text evidence="1">Master enzyme that delivers sulfur to a number of partners involved in Fe-S cluster assembly, tRNA modification or cofactor biosynthesis. Catalyzes the removal of elemental sulfur atoms from cysteine to produce alanine. Functions as a sulfur delivery protein for Fe-S cluster synthesis onto IscU, an Fe-S scaffold assembly protein, as well as other S acceptor proteins.</text>
</comment>
<comment type="catalytic activity">
    <reaction evidence="1">
        <text>(sulfur carrier)-H + L-cysteine = (sulfur carrier)-SH + L-alanine</text>
        <dbReference type="Rhea" id="RHEA:43892"/>
        <dbReference type="Rhea" id="RHEA-COMP:14737"/>
        <dbReference type="Rhea" id="RHEA-COMP:14739"/>
        <dbReference type="ChEBI" id="CHEBI:29917"/>
        <dbReference type="ChEBI" id="CHEBI:35235"/>
        <dbReference type="ChEBI" id="CHEBI:57972"/>
        <dbReference type="ChEBI" id="CHEBI:64428"/>
        <dbReference type="EC" id="2.8.1.7"/>
    </reaction>
</comment>
<comment type="cofactor">
    <cofactor evidence="1">
        <name>pyridoxal 5'-phosphate</name>
        <dbReference type="ChEBI" id="CHEBI:597326"/>
    </cofactor>
</comment>
<comment type="pathway">
    <text evidence="1">Cofactor biosynthesis; iron-sulfur cluster biosynthesis.</text>
</comment>
<comment type="subunit">
    <text evidence="1">Homodimer. Forms a heterotetramer with IscU, interacts with other sulfur acceptors.</text>
</comment>
<comment type="subcellular location">
    <subcellularLocation>
        <location evidence="1">Cytoplasm</location>
    </subcellularLocation>
</comment>
<comment type="similarity">
    <text evidence="1">Belongs to the class-V pyridoxal-phosphate-dependent aminotransferase family. NifS/IscS subfamily.</text>
</comment>
<organism>
    <name type="scientific">Pasteurella multocida (strain Pm70)</name>
    <dbReference type="NCBI Taxonomy" id="272843"/>
    <lineage>
        <taxon>Bacteria</taxon>
        <taxon>Pseudomonadati</taxon>
        <taxon>Pseudomonadota</taxon>
        <taxon>Gammaproteobacteria</taxon>
        <taxon>Pasteurellales</taxon>
        <taxon>Pasteurellaceae</taxon>
        <taxon>Pasteurella</taxon>
    </lineage>
</organism>
<gene>
    <name evidence="1" type="primary">iscS</name>
    <name type="ordered locus">PM0318</name>
</gene>
<name>ISCS_PASMU</name>
<keyword id="KW-0001">2Fe-2S</keyword>
<keyword id="KW-0963">Cytoplasm</keyword>
<keyword id="KW-0408">Iron</keyword>
<keyword id="KW-0411">Iron-sulfur</keyword>
<keyword id="KW-0479">Metal-binding</keyword>
<keyword id="KW-0663">Pyridoxal phosphate</keyword>
<keyword id="KW-1185">Reference proteome</keyword>
<keyword id="KW-0808">Transferase</keyword>
<feature type="chain" id="PRO_0000150273" description="Cysteine desulfurase IscS">
    <location>
        <begin position="1"/>
        <end position="404"/>
    </location>
</feature>
<feature type="active site" description="Cysteine persulfide intermediate" evidence="1">
    <location>
        <position position="328"/>
    </location>
</feature>
<feature type="binding site" evidence="1">
    <location>
        <begin position="75"/>
        <end position="76"/>
    </location>
    <ligand>
        <name>pyridoxal 5'-phosphate</name>
        <dbReference type="ChEBI" id="CHEBI:597326"/>
    </ligand>
</feature>
<feature type="binding site" evidence="1">
    <location>
        <position position="155"/>
    </location>
    <ligand>
        <name>pyridoxal 5'-phosphate</name>
        <dbReference type="ChEBI" id="CHEBI:597326"/>
    </ligand>
</feature>
<feature type="binding site" evidence="1">
    <location>
        <position position="183"/>
    </location>
    <ligand>
        <name>pyridoxal 5'-phosphate</name>
        <dbReference type="ChEBI" id="CHEBI:597326"/>
    </ligand>
</feature>
<feature type="binding site" evidence="1">
    <location>
        <begin position="203"/>
        <end position="205"/>
    </location>
    <ligand>
        <name>pyridoxal 5'-phosphate</name>
        <dbReference type="ChEBI" id="CHEBI:597326"/>
    </ligand>
</feature>
<feature type="binding site" evidence="1">
    <location>
        <position position="243"/>
    </location>
    <ligand>
        <name>pyridoxal 5'-phosphate</name>
        <dbReference type="ChEBI" id="CHEBI:597326"/>
    </ligand>
</feature>
<feature type="binding site" description="via persulfide group" evidence="1">
    <location>
        <position position="328"/>
    </location>
    <ligand>
        <name>[2Fe-2S] cluster</name>
        <dbReference type="ChEBI" id="CHEBI:190135"/>
        <note>ligand shared with IscU</note>
    </ligand>
</feature>
<feature type="modified residue" description="N6-(pyridoxal phosphate)lysine" evidence="1">
    <location>
        <position position="206"/>
    </location>
</feature>
<protein>
    <recommendedName>
        <fullName evidence="1">Cysteine desulfurase IscS</fullName>
        <ecNumber evidence="1">2.8.1.7</ecNumber>
    </recommendedName>
</protein>
<reference key="1">
    <citation type="journal article" date="2001" name="Proc. Natl. Acad. Sci. U.S.A.">
        <title>Complete genomic sequence of Pasteurella multocida Pm70.</title>
        <authorList>
            <person name="May B.J."/>
            <person name="Zhang Q."/>
            <person name="Li L.L."/>
            <person name="Paustian M.L."/>
            <person name="Whittam T.S."/>
            <person name="Kapur V."/>
        </authorList>
    </citation>
    <scope>NUCLEOTIDE SEQUENCE [LARGE SCALE GENOMIC DNA]</scope>
    <source>
        <strain>Pm70</strain>
    </source>
</reference>